<comment type="function">
    <text evidence="1 2">RNA-binding component of the PET complex, a multiprotein complex required for the processing of piRNAs during spermatogenesis. The piRNA metabolic process mediates the repression of transposable elements during meiosis by forming complexes composed of piRNAs and Piwi proteins and governs the methylation and subsequent repression of transposable elements, preventing their mobilization, which is essential for the germline integrity. The PET complex is required during the secondary piRNAs metabolic process for the piwil2 slicing-triggered loading of piwil4 piRNAs. In the PET complex, exd1 probably acts as an RNA adapter. Exd1 is an inactive exonuclease.</text>
</comment>
<comment type="subunit">
    <text evidence="1 2">Homodimer (By similarity). Component of the PET complex (By similarity).</text>
</comment>
<comment type="subcellular location">
    <subcellularLocation>
        <location evidence="1">Cytoplasm</location>
    </subcellularLocation>
    <text evidence="1">Component of the meiotic nuage, also named P granule, a germ-cell-specific organelle required to repress transposon activity during meiosis.</text>
</comment>
<comment type="domain">
    <text evidence="2">The 3'-5' exonuclease domain lacks the conserved Asp-Glu-Asp-Asp (DEDD) residues that coordinates divalent ions essential for exonuclease activity.</text>
</comment>
<comment type="similarity">
    <text evidence="5">Belongs to the EXD1 family.</text>
</comment>
<organism>
    <name type="scientific">Danio rerio</name>
    <name type="common">Zebrafish</name>
    <name type="synonym">Brachydanio rerio</name>
    <dbReference type="NCBI Taxonomy" id="7955"/>
    <lineage>
        <taxon>Eukaryota</taxon>
        <taxon>Metazoa</taxon>
        <taxon>Chordata</taxon>
        <taxon>Craniata</taxon>
        <taxon>Vertebrata</taxon>
        <taxon>Euteleostomi</taxon>
        <taxon>Actinopterygii</taxon>
        <taxon>Neopterygii</taxon>
        <taxon>Teleostei</taxon>
        <taxon>Ostariophysi</taxon>
        <taxon>Cypriniformes</taxon>
        <taxon>Danionidae</taxon>
        <taxon>Danioninae</taxon>
        <taxon>Danio</taxon>
    </lineage>
</organism>
<name>EXD1_DANRE</name>
<reference key="1">
    <citation type="submission" date="2006-08" db="EMBL/GenBank/DDBJ databases">
        <authorList>
            <consortium name="NIH - Zebrafish Gene Collection (ZGC) project"/>
        </authorList>
    </citation>
    <scope>NUCLEOTIDE SEQUENCE [LARGE SCALE MRNA]</scope>
    <source>
        <tissue>Ovary</tissue>
    </source>
</reference>
<sequence>MNNRLNTTSSSEESRFLEEMKRKRVNITLSDTEISGVIQKITQKKTLILEDVSEVRSGRRFPGAKLIFGKEIVKVEFPLSAGQASVFSNEKHKSEFQTFKKKMTLDGEEDGVSYVLIDELHEKFGPAVMHIQEQDVIGIGADVYGQSGQERLCWLQVATKKVVYLFDILLLGGPAFKNGLSMILENTHILKVLHDCRCITRCLRTEFRVQLTNVFDTQVAELLLFFNESGGFLPDRPASLPELLQLHLRLTTAEIQPLCSKQQQSRECVQLWYVRPCPPDLLSLMCSSVQHLLSLRLLLLDALLADYTVLVDSFMSSSHCPPLHFQQDECAVPPELQELMCVRQQRMDWASQCYSQTDSGLLQRSSFKASPHTPADAQ</sequence>
<keyword id="KW-0963">Cytoplasm</keyword>
<keyword id="KW-0469">Meiosis</keyword>
<keyword id="KW-1185">Reference proteome</keyword>
<keyword id="KW-0694">RNA-binding</keyword>
<keyword id="KW-0943">RNA-mediated gene silencing</keyword>
<proteinExistence type="evidence at transcript level"/>
<feature type="chain" id="PRO_0000337246" description="piRNA biogenesis protein EXD1">
    <location>
        <begin position="1"/>
        <end position="378"/>
    </location>
</feature>
<feature type="domain" description="3'-5' exonuclease" evidence="4">
    <location>
        <begin position="112"/>
        <end position="304"/>
    </location>
</feature>
<dbReference type="EMBL" id="BC122448">
    <property type="protein sequence ID" value="AAI22449.1"/>
    <property type="molecule type" value="mRNA"/>
</dbReference>
<dbReference type="RefSeq" id="NP_001038930.1">
    <property type="nucleotide sequence ID" value="NM_001045465.2"/>
</dbReference>
<dbReference type="SMR" id="Q0P3U3"/>
<dbReference type="FunCoup" id="Q0P3U3">
    <property type="interactions" value="377"/>
</dbReference>
<dbReference type="STRING" id="7955.ENSDARP00000145238"/>
<dbReference type="GeneID" id="751755"/>
<dbReference type="KEGG" id="dre:751755"/>
<dbReference type="AGR" id="ZFIN:ZDB-GENE-060825-267"/>
<dbReference type="CTD" id="161829"/>
<dbReference type="ZFIN" id="ZDB-GENE-060825-267">
    <property type="gene designation" value="exd1"/>
</dbReference>
<dbReference type="InParanoid" id="Q0P3U3"/>
<dbReference type="OrthoDB" id="26838at2759"/>
<dbReference type="PhylomeDB" id="Q0P3U3"/>
<dbReference type="PRO" id="PR:Q0P3U3"/>
<dbReference type="Proteomes" id="UP000000437">
    <property type="component" value="Chromosome 17"/>
</dbReference>
<dbReference type="GO" id="GO:0043186">
    <property type="term" value="C:P granule"/>
    <property type="evidence" value="ECO:0000250"/>
    <property type="project" value="UniProtKB"/>
</dbReference>
<dbReference type="GO" id="GO:1990923">
    <property type="term" value="C:PET complex"/>
    <property type="evidence" value="ECO:0000250"/>
    <property type="project" value="UniProtKB"/>
</dbReference>
<dbReference type="GO" id="GO:0042803">
    <property type="term" value="F:protein homodimerization activity"/>
    <property type="evidence" value="ECO:0000250"/>
    <property type="project" value="UniProtKB"/>
</dbReference>
<dbReference type="GO" id="GO:0003723">
    <property type="term" value="F:RNA binding"/>
    <property type="evidence" value="ECO:0000250"/>
    <property type="project" value="UniProtKB"/>
</dbReference>
<dbReference type="GO" id="GO:0051321">
    <property type="term" value="P:meiotic cell cycle"/>
    <property type="evidence" value="ECO:0007669"/>
    <property type="project" value="UniProtKB-KW"/>
</dbReference>
<dbReference type="GO" id="GO:0034587">
    <property type="term" value="P:piRNA processing"/>
    <property type="evidence" value="ECO:0000250"/>
    <property type="project" value="UniProtKB"/>
</dbReference>
<dbReference type="GO" id="GO:0031047">
    <property type="term" value="P:regulatory ncRNA-mediated gene silencing"/>
    <property type="evidence" value="ECO:0000250"/>
    <property type="project" value="UniProtKB"/>
</dbReference>
<dbReference type="Gene3D" id="3.30.420.10">
    <property type="entry name" value="Ribonuclease H-like superfamily/Ribonuclease H"/>
    <property type="match status" value="1"/>
</dbReference>
<dbReference type="InterPro" id="IPR002562">
    <property type="entry name" value="3'-5'_exonuclease_dom"/>
</dbReference>
<dbReference type="InterPro" id="IPR052144">
    <property type="entry name" value="piRNA_biogenesis_EXD1"/>
</dbReference>
<dbReference type="InterPro" id="IPR012337">
    <property type="entry name" value="RNaseH-like_sf"/>
</dbReference>
<dbReference type="InterPro" id="IPR036397">
    <property type="entry name" value="RNaseH_sf"/>
</dbReference>
<dbReference type="PANTHER" id="PTHR46628">
    <property type="entry name" value="PIRNA BIOGENESIS PROTEIN EXD1"/>
    <property type="match status" value="1"/>
</dbReference>
<dbReference type="PANTHER" id="PTHR46628:SF1">
    <property type="entry name" value="PIRNA BIOGENESIS PROTEIN EXD1"/>
    <property type="match status" value="1"/>
</dbReference>
<dbReference type="Pfam" id="PF01612">
    <property type="entry name" value="DNA_pol_A_exo1"/>
    <property type="match status" value="1"/>
</dbReference>
<dbReference type="SUPFAM" id="SSF53098">
    <property type="entry name" value="Ribonuclease H-like"/>
    <property type="match status" value="1"/>
</dbReference>
<accession>Q0P3U3</accession>
<gene>
    <name type="primary">exd1</name>
    <name type="synonym">exdl1</name>
    <name type="ORF">zgc:154068</name>
</gene>
<protein>
    <recommendedName>
        <fullName evidence="5">piRNA biogenesis protein EXD1</fullName>
    </recommendedName>
    <alternativeName>
        <fullName evidence="3">Exonuclease 3'-5' domain-containing protein 1</fullName>
    </alternativeName>
    <alternativeName>
        <fullName evidence="3">Exonuclease 3'-5' domain-like-containing protein 1</fullName>
    </alternativeName>
    <alternativeName>
        <fullName evidence="5">Inactive exonuclease EXD1</fullName>
    </alternativeName>
</protein>
<evidence type="ECO:0000250" key="1">
    <source>
        <dbReference type="UniProtKB" id="H9IUR0"/>
    </source>
</evidence>
<evidence type="ECO:0000250" key="2">
    <source>
        <dbReference type="UniProtKB" id="Q8CDF7"/>
    </source>
</evidence>
<evidence type="ECO:0000250" key="3">
    <source>
        <dbReference type="UniProtKB" id="Q8NHP7"/>
    </source>
</evidence>
<evidence type="ECO:0000255" key="4"/>
<evidence type="ECO:0000305" key="5"/>